<geneLocation type="plasmid">
    <name>pCD1</name>
</geneLocation>
<sequence length="261" mass="28451">MIADLIQRPLLTYTLLLPRFMACFVILPVLSKQLLGGVLLRNGIVCSLALYVYPAVANQPYIEVDAFTLMLLIGKEIILGLLIGFVATIPFWALESAGFIVDNQRGAAMASLLNPGLDSQTSPTGLLLTQTLITIFFSGGAFLSLLSALFHSYVNWPVASFFPAVSEQWVDFFYNQFSQILLIAAVLAAPLLIAMFLAEFGLALISRFAPSLNVFVLAMPIKSAIASLLLVIYCMQMMSHASKAMLLVMDPISLLIPVLEK</sequence>
<evidence type="ECO:0000250" key="1"/>
<evidence type="ECO:0000255" key="2"/>
<evidence type="ECO:0000305" key="3"/>
<comment type="function">
    <text evidence="1">Component of the yop secretion machinery.</text>
</comment>
<comment type="subcellular location">
    <subcellularLocation>
        <location evidence="3">Cell membrane</location>
        <topology evidence="3">Multi-pass membrane protein</topology>
    </subcellularLocation>
</comment>
<comment type="similarity">
    <text evidence="3">Belongs to the FliR/MopE/SpaR family.</text>
</comment>
<gene>
    <name type="primary">yscT</name>
    <name type="ordered locus">YPCD1.46</name>
    <name type="ordered locus">y5032</name>
    <name type="ordered locus">y0035</name>
    <name type="ordered locus">YP_pCD37</name>
</gene>
<accession>P69984</accession>
<accession>P40299</accession>
<accession>Q663J3</accession>
<dbReference type="EMBL" id="AF074612">
    <property type="protein sequence ID" value="AAC69785.1"/>
    <property type="molecule type" value="Genomic_DNA"/>
</dbReference>
<dbReference type="EMBL" id="AF053946">
    <property type="protein sequence ID" value="AAC62558.1"/>
    <property type="molecule type" value="Genomic_DNA"/>
</dbReference>
<dbReference type="EMBL" id="AL117189">
    <property type="protein sequence ID" value="CAB54923.1"/>
    <property type="molecule type" value="Genomic_DNA"/>
</dbReference>
<dbReference type="EMBL" id="AE017043">
    <property type="protein sequence ID" value="AAS58556.1"/>
    <property type="molecule type" value="Genomic_DNA"/>
</dbReference>
<dbReference type="PIR" id="T43579">
    <property type="entry name" value="T43579"/>
</dbReference>
<dbReference type="RefSeq" id="NP_395180.1">
    <property type="nucleotide sequence ID" value="NC_003131.1"/>
</dbReference>
<dbReference type="RefSeq" id="NP_857736.1">
    <property type="nucleotide sequence ID" value="NC_004836.1"/>
</dbReference>
<dbReference type="RefSeq" id="NP_857931.1">
    <property type="nucleotide sequence ID" value="NC_004839.1"/>
</dbReference>
<dbReference type="RefSeq" id="WP_002212938.1">
    <property type="nucleotide sequence ID" value="NZ_WUCM01000070.1"/>
</dbReference>
<dbReference type="SMR" id="P69984"/>
<dbReference type="IntAct" id="P69984">
    <property type="interactions" value="1"/>
</dbReference>
<dbReference type="PaxDb" id="214092-5832466"/>
<dbReference type="DNASU" id="1149295"/>
<dbReference type="EnsemblBacteria" id="AAS58556">
    <property type="protein sequence ID" value="AAS58556"/>
    <property type="gene ID" value="YP_pCD37"/>
</dbReference>
<dbReference type="KEGG" id="ype:YPCD1.46"/>
<dbReference type="KEGG" id="ypm:YP_pCD37"/>
<dbReference type="PATRIC" id="fig|214092.21.peg.57"/>
<dbReference type="eggNOG" id="COG4791">
    <property type="taxonomic scope" value="Bacteria"/>
</dbReference>
<dbReference type="HOGENOM" id="CLU_063626_0_2_6"/>
<dbReference type="OMA" id="FWLFESV"/>
<dbReference type="OrthoDB" id="9807748at2"/>
<dbReference type="Proteomes" id="UP000000815">
    <property type="component" value="Plasmid pCD1"/>
</dbReference>
<dbReference type="Proteomes" id="UP000001019">
    <property type="component" value="Plasmid pCD1"/>
</dbReference>
<dbReference type="GO" id="GO:0005886">
    <property type="term" value="C:plasma membrane"/>
    <property type="evidence" value="ECO:0000318"/>
    <property type="project" value="GO_Central"/>
</dbReference>
<dbReference type="GO" id="GO:0006605">
    <property type="term" value="P:protein targeting"/>
    <property type="evidence" value="ECO:0007669"/>
    <property type="project" value="InterPro"/>
</dbReference>
<dbReference type="GO" id="GO:0015031">
    <property type="term" value="P:protein transport"/>
    <property type="evidence" value="ECO:0007669"/>
    <property type="project" value="UniProtKB-KW"/>
</dbReference>
<dbReference type="InterPro" id="IPR002010">
    <property type="entry name" value="T3SS_IM_R"/>
</dbReference>
<dbReference type="InterPro" id="IPR006304">
    <property type="entry name" value="T3SS_SpaR/YscT"/>
</dbReference>
<dbReference type="NCBIfam" id="TIGR01401">
    <property type="entry name" value="fliR_like_III"/>
    <property type="match status" value="1"/>
</dbReference>
<dbReference type="PANTHER" id="PTHR30065">
    <property type="entry name" value="FLAGELLAR BIOSYNTHETIC PROTEIN FLIR"/>
    <property type="match status" value="1"/>
</dbReference>
<dbReference type="PANTHER" id="PTHR30065:SF1">
    <property type="entry name" value="SURFACE PRESENTATION OF ANTIGENS PROTEIN SPAR"/>
    <property type="match status" value="1"/>
</dbReference>
<dbReference type="Pfam" id="PF01311">
    <property type="entry name" value="Bac_export_1"/>
    <property type="match status" value="1"/>
</dbReference>
<dbReference type="PRINTS" id="PR00953">
    <property type="entry name" value="TYPE3IMRPROT"/>
</dbReference>
<proteinExistence type="inferred from homology"/>
<reference key="1">
    <citation type="journal article" date="1998" name="Infect. Immun.">
        <title>DNA sequencing and analysis of the low-Ca2+-response plasmid pCD1 of Yersinia pestis KIM5.</title>
        <authorList>
            <person name="Perry R.D."/>
            <person name="Straley S.C."/>
            <person name="Fetherston J.D."/>
            <person name="Rose D.J."/>
            <person name="Gregor J."/>
            <person name="Blattner F.R."/>
        </authorList>
    </citation>
    <scope>NUCLEOTIDE SEQUENCE [GENOMIC DNA]</scope>
    <source>
        <strain>KIM5 / Biovar Mediaevalis</strain>
    </source>
</reference>
<reference key="2">
    <citation type="journal article" date="1998" name="J. Bacteriol.">
        <title>Structural organization of virulence-associated plasmids of Yersinia pestis.</title>
        <authorList>
            <person name="Hu P."/>
            <person name="Elliott J."/>
            <person name="McCready P."/>
            <person name="Skowronski E."/>
            <person name="Garnes J."/>
            <person name="Kobayashi A."/>
            <person name="Brubaker R.R."/>
            <person name="Garcia E."/>
        </authorList>
    </citation>
    <scope>NUCLEOTIDE SEQUENCE [GENOMIC DNA]</scope>
    <source>
        <strain>KIM5 / Biovar Mediaevalis</strain>
    </source>
</reference>
<reference key="3">
    <citation type="journal article" date="2001" name="Nature">
        <title>Genome sequence of Yersinia pestis, the causative agent of plague.</title>
        <authorList>
            <person name="Parkhill J."/>
            <person name="Wren B.W."/>
            <person name="Thomson N.R."/>
            <person name="Titball R.W."/>
            <person name="Holden M.T.G."/>
            <person name="Prentice M.B."/>
            <person name="Sebaihia M."/>
            <person name="James K.D."/>
            <person name="Churcher C.M."/>
            <person name="Mungall K.L."/>
            <person name="Baker S."/>
            <person name="Basham D."/>
            <person name="Bentley S.D."/>
            <person name="Brooks K."/>
            <person name="Cerdeno-Tarraga A.-M."/>
            <person name="Chillingworth T."/>
            <person name="Cronin A."/>
            <person name="Davies R.M."/>
            <person name="Davis P."/>
            <person name="Dougan G."/>
            <person name="Feltwell T."/>
            <person name="Hamlin N."/>
            <person name="Holroyd S."/>
            <person name="Jagels K."/>
            <person name="Karlyshev A.V."/>
            <person name="Leather S."/>
            <person name="Moule S."/>
            <person name="Oyston P.C.F."/>
            <person name="Quail M.A."/>
            <person name="Rutherford K.M."/>
            <person name="Simmonds M."/>
            <person name="Skelton J."/>
            <person name="Stevens K."/>
            <person name="Whitehead S."/>
            <person name="Barrell B.G."/>
        </authorList>
    </citation>
    <scope>NUCLEOTIDE SEQUENCE [LARGE SCALE GENOMIC DNA]</scope>
    <source>
        <strain>CO-92 / Biovar Orientalis</strain>
    </source>
</reference>
<reference key="4">
    <citation type="journal article" date="2004" name="DNA Res.">
        <title>Complete genome sequence of Yersinia pestis strain 91001, an isolate avirulent to humans.</title>
        <authorList>
            <person name="Song Y."/>
            <person name="Tong Z."/>
            <person name="Wang J."/>
            <person name="Wang L."/>
            <person name="Guo Z."/>
            <person name="Han Y."/>
            <person name="Zhang J."/>
            <person name="Pei D."/>
            <person name="Zhou D."/>
            <person name="Qin H."/>
            <person name="Pang X."/>
            <person name="Han Y."/>
            <person name="Zhai J."/>
            <person name="Li M."/>
            <person name="Cui B."/>
            <person name="Qi Z."/>
            <person name="Jin L."/>
            <person name="Dai R."/>
            <person name="Chen F."/>
            <person name="Li S."/>
            <person name="Ye C."/>
            <person name="Du Z."/>
            <person name="Lin W."/>
            <person name="Wang J."/>
            <person name="Yu J."/>
            <person name="Yang H."/>
            <person name="Wang J."/>
            <person name="Huang P."/>
            <person name="Yang R."/>
        </authorList>
    </citation>
    <scope>NUCLEOTIDE SEQUENCE [LARGE SCALE GENOMIC DNA]</scope>
    <source>
        <strain>91001 / Biovar Mediaevalis</strain>
    </source>
</reference>
<feature type="chain" id="PRO_0000192063" description="Yop proteins translocation protein T">
    <location>
        <begin position="1"/>
        <end position="261"/>
    </location>
</feature>
<feature type="transmembrane region" description="Helical" evidence="2">
    <location>
        <begin position="20"/>
        <end position="40"/>
    </location>
</feature>
<feature type="transmembrane region" description="Helical" evidence="2">
    <location>
        <begin position="44"/>
        <end position="64"/>
    </location>
</feature>
<feature type="transmembrane region" description="Helical" evidence="2">
    <location>
        <begin position="77"/>
        <end position="97"/>
    </location>
</feature>
<feature type="transmembrane region" description="Helical" evidence="2">
    <location>
        <begin position="131"/>
        <end position="151"/>
    </location>
</feature>
<feature type="transmembrane region" description="Helical" evidence="2">
    <location>
        <begin position="180"/>
        <end position="200"/>
    </location>
</feature>
<feature type="transmembrane region" description="Helical" evidence="2">
    <location>
        <begin position="214"/>
        <end position="234"/>
    </location>
</feature>
<feature type="transmembrane region" description="Helical" evidence="2">
    <location>
        <begin position="239"/>
        <end position="259"/>
    </location>
</feature>
<name>YSCT_YERPE</name>
<keyword id="KW-1003">Cell membrane</keyword>
<keyword id="KW-0472">Membrane</keyword>
<keyword id="KW-0614">Plasmid</keyword>
<keyword id="KW-0653">Protein transport</keyword>
<keyword id="KW-1185">Reference proteome</keyword>
<keyword id="KW-0812">Transmembrane</keyword>
<keyword id="KW-1133">Transmembrane helix</keyword>
<keyword id="KW-0813">Transport</keyword>
<keyword id="KW-0843">Virulence</keyword>
<organism>
    <name type="scientific">Yersinia pestis</name>
    <dbReference type="NCBI Taxonomy" id="632"/>
    <lineage>
        <taxon>Bacteria</taxon>
        <taxon>Pseudomonadati</taxon>
        <taxon>Pseudomonadota</taxon>
        <taxon>Gammaproteobacteria</taxon>
        <taxon>Enterobacterales</taxon>
        <taxon>Yersiniaceae</taxon>
        <taxon>Yersinia</taxon>
    </lineage>
</organism>
<protein>
    <recommendedName>
        <fullName>Yop proteins translocation protein T</fullName>
    </recommendedName>
</protein>